<comment type="function">
    <text evidence="1">Part of ribonuclease P, a protein complex that generates mature tRNA molecules by cleaving their 5'-ends.</text>
</comment>
<comment type="catalytic activity">
    <reaction evidence="1">
        <text>Endonucleolytic cleavage of RNA, removing 5'-extranucleotides from tRNA precursor.</text>
        <dbReference type="EC" id="3.1.26.5"/>
    </reaction>
</comment>
<comment type="subunit">
    <text evidence="1">Consists of a catalytic RNA component and at least 4-5 protein subunits.</text>
</comment>
<comment type="subcellular location">
    <subcellularLocation>
        <location evidence="1">Cytoplasm</location>
    </subcellularLocation>
</comment>
<comment type="similarity">
    <text evidence="1">Belongs to the eukaryotic/archaeal RNase P protein component 2 family.</text>
</comment>
<reference key="1">
    <citation type="journal article" date="2009" name="Proc. Natl. Acad. Sci. U.S.A.">
        <title>Biogeography of the Sulfolobus islandicus pan-genome.</title>
        <authorList>
            <person name="Reno M.L."/>
            <person name="Held N.L."/>
            <person name="Fields C.J."/>
            <person name="Burke P.V."/>
            <person name="Whitaker R.J."/>
        </authorList>
    </citation>
    <scope>NUCLEOTIDE SEQUENCE [LARGE SCALE GENOMIC DNA]</scope>
    <source>
        <strain>L.S.2.15 / Lassen #1</strain>
    </source>
</reference>
<accession>C3MQ42</accession>
<dbReference type="EC" id="3.1.26.5" evidence="1"/>
<dbReference type="EMBL" id="CP001399">
    <property type="protein sequence ID" value="ACP35505.1"/>
    <property type="molecule type" value="Genomic_DNA"/>
</dbReference>
<dbReference type="RefSeq" id="WP_012713725.1">
    <property type="nucleotide sequence ID" value="NC_012589.1"/>
</dbReference>
<dbReference type="SMR" id="C3MQ42"/>
<dbReference type="GeneID" id="7799127"/>
<dbReference type="KEGG" id="sis:LS215_1497"/>
<dbReference type="HOGENOM" id="CLU_1801579_0_0_2"/>
<dbReference type="OrthoDB" id="34695at2157"/>
<dbReference type="Proteomes" id="UP000001747">
    <property type="component" value="Chromosome"/>
</dbReference>
<dbReference type="GO" id="GO:0005737">
    <property type="term" value="C:cytoplasm"/>
    <property type="evidence" value="ECO:0007669"/>
    <property type="project" value="UniProtKB-SubCell"/>
</dbReference>
<dbReference type="GO" id="GO:0030677">
    <property type="term" value="C:ribonuclease P complex"/>
    <property type="evidence" value="ECO:0007669"/>
    <property type="project" value="UniProtKB-UniRule"/>
</dbReference>
<dbReference type="GO" id="GO:0004526">
    <property type="term" value="F:ribonuclease P activity"/>
    <property type="evidence" value="ECO:0007669"/>
    <property type="project" value="UniProtKB-UniRule"/>
</dbReference>
<dbReference type="GO" id="GO:0001682">
    <property type="term" value="P:tRNA 5'-leader removal"/>
    <property type="evidence" value="ECO:0007669"/>
    <property type="project" value="UniProtKB-UniRule"/>
</dbReference>
<dbReference type="Gene3D" id="3.30.70.3250">
    <property type="entry name" value="Ribonuclease P, Pop5 subunit"/>
    <property type="match status" value="1"/>
</dbReference>
<dbReference type="HAMAP" id="MF_00755">
    <property type="entry name" value="RNase_P_2"/>
    <property type="match status" value="1"/>
</dbReference>
<dbReference type="InterPro" id="IPR002759">
    <property type="entry name" value="Pop5/Rpp14/Rnp2-like"/>
</dbReference>
<dbReference type="InterPro" id="IPR038085">
    <property type="entry name" value="Rnp2-like_sf"/>
</dbReference>
<dbReference type="Pfam" id="PF01900">
    <property type="entry name" value="RNase_P_Rpp14"/>
    <property type="match status" value="1"/>
</dbReference>
<dbReference type="SUPFAM" id="SSF160350">
    <property type="entry name" value="Rnp2-like"/>
    <property type="match status" value="1"/>
</dbReference>
<sequence length="143" mass="16327">MNSIQLIIDIILILWLLILTVLYLRKKSLNLNIVKNKKIVRAKRYIVFYVIAESKVKSDDLERVVRNSLKDLLGNVWLNIANPKVVTYREDTQEGIISTNRIGYKAVLASLPFAKEINGNKILIVPRRTTGSLKKAKKLIGLK</sequence>
<keyword id="KW-0963">Cytoplasm</keyword>
<keyword id="KW-0255">Endonuclease</keyword>
<keyword id="KW-0378">Hydrolase</keyword>
<keyword id="KW-0540">Nuclease</keyword>
<keyword id="KW-0819">tRNA processing</keyword>
<name>RNP2_SACI2</name>
<evidence type="ECO:0000255" key="1">
    <source>
        <dbReference type="HAMAP-Rule" id="MF_00755"/>
    </source>
</evidence>
<organism>
    <name type="scientific">Saccharolobus islandicus (strain L.S.2.15 / Lassen #1)</name>
    <name type="common">Sulfolobus islandicus</name>
    <dbReference type="NCBI Taxonomy" id="429572"/>
    <lineage>
        <taxon>Archaea</taxon>
        <taxon>Thermoproteota</taxon>
        <taxon>Thermoprotei</taxon>
        <taxon>Sulfolobales</taxon>
        <taxon>Sulfolobaceae</taxon>
        <taxon>Saccharolobus</taxon>
    </lineage>
</organism>
<protein>
    <recommendedName>
        <fullName evidence="1">Ribonuclease P protein component 2</fullName>
        <shortName evidence="1">RNase P component 2</shortName>
        <ecNumber evidence="1">3.1.26.5</ecNumber>
    </recommendedName>
    <alternativeName>
        <fullName evidence="1">Pop5</fullName>
    </alternativeName>
</protein>
<proteinExistence type="inferred from homology"/>
<feature type="chain" id="PRO_1000212855" description="Ribonuclease P protein component 2">
    <location>
        <begin position="1"/>
        <end position="143"/>
    </location>
</feature>
<gene>
    <name evidence="1" type="primary">rnp2</name>
    <name type="ordered locus">LS215_1497</name>
</gene>